<sequence length="59" mass="6554">MFAGLPSLTHEQQQKAVERIQELMAQGMSSGQAIALVAEELRANHSGERIVARFEDEDE</sequence>
<gene>
    <name evidence="1" type="primary">yoaH</name>
    <name type="ordered locus">EFER_1265</name>
</gene>
<dbReference type="EMBL" id="CU928158">
    <property type="protein sequence ID" value="CAQ88789.1"/>
    <property type="molecule type" value="Genomic_DNA"/>
</dbReference>
<dbReference type="RefSeq" id="WP_000457334.1">
    <property type="nucleotide sequence ID" value="NC_011740.1"/>
</dbReference>
<dbReference type="SMR" id="B7LPN6"/>
<dbReference type="KEGG" id="efe:EFER_1265"/>
<dbReference type="HOGENOM" id="CLU_185263_0_0_6"/>
<dbReference type="OrthoDB" id="6522084at2"/>
<dbReference type="Proteomes" id="UP000000745">
    <property type="component" value="Chromosome"/>
</dbReference>
<dbReference type="HAMAP" id="MF_00507">
    <property type="entry name" value="UPF0181"/>
    <property type="match status" value="1"/>
</dbReference>
<dbReference type="InterPro" id="IPR005371">
    <property type="entry name" value="UPF0181"/>
</dbReference>
<dbReference type="NCBIfam" id="NF003476">
    <property type="entry name" value="PRK05114.1"/>
    <property type="match status" value="1"/>
</dbReference>
<dbReference type="Pfam" id="PF03701">
    <property type="entry name" value="UPF0181"/>
    <property type="match status" value="1"/>
</dbReference>
<feature type="chain" id="PRO_1000127050" description="UPF0181 protein YoaH">
    <location>
        <begin position="1"/>
        <end position="59"/>
    </location>
</feature>
<reference key="1">
    <citation type="journal article" date="2009" name="PLoS Genet.">
        <title>Organised genome dynamics in the Escherichia coli species results in highly diverse adaptive paths.</title>
        <authorList>
            <person name="Touchon M."/>
            <person name="Hoede C."/>
            <person name="Tenaillon O."/>
            <person name="Barbe V."/>
            <person name="Baeriswyl S."/>
            <person name="Bidet P."/>
            <person name="Bingen E."/>
            <person name="Bonacorsi S."/>
            <person name="Bouchier C."/>
            <person name="Bouvet O."/>
            <person name="Calteau A."/>
            <person name="Chiapello H."/>
            <person name="Clermont O."/>
            <person name="Cruveiller S."/>
            <person name="Danchin A."/>
            <person name="Diard M."/>
            <person name="Dossat C."/>
            <person name="Karoui M.E."/>
            <person name="Frapy E."/>
            <person name="Garry L."/>
            <person name="Ghigo J.M."/>
            <person name="Gilles A.M."/>
            <person name="Johnson J."/>
            <person name="Le Bouguenec C."/>
            <person name="Lescat M."/>
            <person name="Mangenot S."/>
            <person name="Martinez-Jehanne V."/>
            <person name="Matic I."/>
            <person name="Nassif X."/>
            <person name="Oztas S."/>
            <person name="Petit M.A."/>
            <person name="Pichon C."/>
            <person name="Rouy Z."/>
            <person name="Ruf C.S."/>
            <person name="Schneider D."/>
            <person name="Tourret J."/>
            <person name="Vacherie B."/>
            <person name="Vallenet D."/>
            <person name="Medigue C."/>
            <person name="Rocha E.P.C."/>
            <person name="Denamur E."/>
        </authorList>
    </citation>
    <scope>NUCLEOTIDE SEQUENCE [LARGE SCALE GENOMIC DNA]</scope>
    <source>
        <strain>ATCC 35469 / DSM 13698 / BCRC 15582 / CCUG 18766 / IAM 14443 / JCM 21226 / LMG 7866 / NBRC 102419 / NCTC 12128 / CDC 0568-73</strain>
    </source>
</reference>
<organism>
    <name type="scientific">Escherichia fergusonii (strain ATCC 35469 / DSM 13698 / CCUG 18766 / IAM 14443 / JCM 21226 / LMG 7866 / NBRC 102419 / NCTC 12128 / CDC 0568-73)</name>
    <dbReference type="NCBI Taxonomy" id="585054"/>
    <lineage>
        <taxon>Bacteria</taxon>
        <taxon>Pseudomonadati</taxon>
        <taxon>Pseudomonadota</taxon>
        <taxon>Gammaproteobacteria</taxon>
        <taxon>Enterobacterales</taxon>
        <taxon>Enterobacteriaceae</taxon>
        <taxon>Escherichia</taxon>
    </lineage>
</organism>
<accession>B7LPN6</accession>
<protein>
    <recommendedName>
        <fullName evidence="1">UPF0181 protein YoaH</fullName>
    </recommendedName>
</protein>
<name>YOAH_ESCF3</name>
<comment type="similarity">
    <text evidence="1">Belongs to the UPF0181 family.</text>
</comment>
<evidence type="ECO:0000255" key="1">
    <source>
        <dbReference type="HAMAP-Rule" id="MF_00507"/>
    </source>
</evidence>
<proteinExistence type="inferred from homology"/>